<evidence type="ECO:0000250" key="1"/>
<evidence type="ECO:0000250" key="2">
    <source>
        <dbReference type="UniProtKB" id="Q80XH2"/>
    </source>
</evidence>
<evidence type="ECO:0000255" key="3"/>
<evidence type="ECO:0000255" key="4">
    <source>
        <dbReference type="PROSITE-ProRule" id="PRU00076"/>
    </source>
</evidence>
<evidence type="ECO:0000255" key="5">
    <source>
        <dbReference type="PROSITE-ProRule" id="PRU00188"/>
    </source>
</evidence>
<evidence type="ECO:0000256" key="6">
    <source>
        <dbReference type="SAM" id="MobiDB-lite"/>
    </source>
</evidence>
<evidence type="ECO:0000269" key="7">
    <source>
    </source>
</evidence>
<evidence type="ECO:0000269" key="8">
    <source>
    </source>
</evidence>
<evidence type="ECO:0000305" key="9"/>
<sequence length="1241" mass="137547">MIMFLPLGRISLGILILFLTGGNLVSVSEEIQDRMHAVAVLSPKESTDLSLPTRKRQLLDATETGRRWPLRRRRSILFPNGVRICPSDTVAEAVANHVKYFKARVCQEAIWEAFRTFWDRLPGREEYQYWMNLCEDGVTSVFEMGTQFSQSVEHRHLIMEKLTYTKEAESSSCKDQACGPELSSPVPIGETSTLAGAVSSASYPGAASERSAASPQESISNEIENVTEQPTPPAAEQIAEFSIQLLGKQYSEELRDPSSALYRLLVEEFISEVEKAFTGLPGYKGIHVLDFRSPKENGSGIDVHYAVTFNGEAISNTTWDLISLHSNKVENHGLVELDDKPTAVYTISNFRDYIAETLHQNFLMGNSSLNPDPKSLQLINVRGVLLPQTEEIVWNTQSSSLQVTTSSILDNTLQAEWLSADESITTTTTTTISPFGFSSGPPSATGRELHSESTLGDIVSTPKLASPSKVVLSSSPEVLGGSSLTLHSVTPAVLQIDLPVAPEGRTSGSSILEDDNTEESEDVSIDVLPSSSLIQPVPKETVPPMEDSDMILLTSSPHLTSSVIEDLAKDITTPSGLDSLASRVSDKLDVSPWFPDTSVEKEFIFESGLGSGSGKNVDVIDWPWSETSLEKTTEPLSKSWSEEQDTLLPTESIEKLHMYFTEQMIEPSAHRYGDGPIYFTEEESHVRSTIPIFAESATQPTSLISSKHTSDVPDIDSYSVTKAPFLLATIANTASTKETDEVNTLLKKGMVQTEPSSPKGLDSKISVARPDMQPVWTILPESDTVWARTSSLGKLSRDTLVSTPESADRLWLKASMTQPAELPPSTHSIQLEDEVIMAVQNISLELDQVGTDYYQPELTQEQNGKVDSYVEMPTHVHYTEMPLVAQPTKGGVLSRTQTAGALVVFFSLRVTNMLFSEDLFNKNSLEYKALEQRFLELLVPYLQSNLSGFQNLEILNFRNGSIVVNSRVKFAESVPPNVNNAIYMILEDFCTTAYQTMNLDIDKYSLDVESGDDANPCKFQACNEFSECLVNPWSGEAKCKCHPGYLSVDELPCQSVCDLQPDFCLNDGKCDVMPGHGAICRCRVGSNWWYRGQHCEEFVSEPFVIGITIASVVSLLLVASAVVFFLAKMLQAQNVRRERQRPTNRQPDSLSSVENAMKYNPAYESRLAGCEQYEKPYSQHPFYSSASEEVIGGLSREEIRQMYESSDLSKEEIQERMRILELYANDPEFAAFVREHEMEEL</sequence>
<accession>P70628</accession>
<proteinExistence type="evidence at transcript level"/>
<reference key="1">
    <citation type="journal article" date="1996" name="Brain Res. Mol. Brain Res.">
        <title>Sequence analysis of PG10.2, a gene expressed in the pineal gland and the outer nuclear layer of the retina.</title>
        <authorList>
            <person name="Wang X."/>
            <person name="Brownstein M.J."/>
            <person name="Young W.S. III"/>
        </authorList>
    </citation>
    <scope>NUCLEOTIDE SEQUENCE [MRNA]</scope>
    <scope>TISSUE SPECIFICITY</scope>
</reference>
<reference key="2">
    <citation type="journal article" date="2001" name="J. Comp. Neurol.">
        <title>SPACRCAN in the developing retina and pineal gland of the rat: spatial and temporal pattern of gene expression and protein synthesis.</title>
        <authorList>
            <person name="Foletta V.C."/>
            <person name="Nishiyama K."/>
            <person name="Rayborn M.E."/>
            <person name="Shadrach K.G."/>
            <person name="Young W.S. III"/>
            <person name="Hollyfield J.G."/>
        </authorList>
    </citation>
    <scope>FUNCTION</scope>
    <scope>DEVELOPMENTAL STAGE</scope>
</reference>
<name>IMPG2_RAT</name>
<feature type="signal peptide" evidence="3">
    <location>
        <begin position="1"/>
        <end position="28"/>
    </location>
</feature>
<feature type="chain" id="PRO_0000320151" description="Interphotoreceptor matrix proteoglycan 2">
    <location>
        <begin position="29"/>
        <end position="1241"/>
    </location>
</feature>
<feature type="topological domain" description="Extracellular" evidence="3">
    <location>
        <begin position="29"/>
        <end position="1104"/>
    </location>
</feature>
<feature type="transmembrane region" description="Helical" evidence="3">
    <location>
        <begin position="1105"/>
        <end position="1125"/>
    </location>
</feature>
<feature type="topological domain" description="Cytoplasmic" evidence="3">
    <location>
        <begin position="1126"/>
        <end position="1241"/>
    </location>
</feature>
<feature type="domain" description="SEA 1" evidence="5">
    <location>
        <begin position="235"/>
        <end position="349"/>
    </location>
</feature>
<feature type="domain" description="SEA 2" evidence="5">
    <location>
        <begin position="900"/>
        <end position="1013"/>
    </location>
</feature>
<feature type="domain" description="EGF-like 1" evidence="4">
    <location>
        <begin position="1013"/>
        <end position="1054"/>
    </location>
</feature>
<feature type="domain" description="EGF-like 2" evidence="4">
    <location>
        <begin position="1055"/>
        <end position="1096"/>
    </location>
</feature>
<feature type="region of interest" description="Disordered" evidence="6">
    <location>
        <begin position="206"/>
        <end position="234"/>
    </location>
</feature>
<feature type="region of interest" description="Hyaluronan-binding motif involved in chondroitin sulfate A-binding" evidence="1">
    <location>
        <begin position="255"/>
        <end position="263"/>
    </location>
</feature>
<feature type="region of interest" description="Disordered" evidence="6">
    <location>
        <begin position="431"/>
        <end position="456"/>
    </location>
</feature>
<feature type="region of interest" description="Disordered" evidence="6">
    <location>
        <begin position="500"/>
        <end position="520"/>
    </location>
</feature>
<feature type="region of interest" description="Hyaluronan-binding motif involved in chondroitin sulfate C-binding" evidence="1">
    <location>
        <begin position="1083"/>
        <end position="1091"/>
    </location>
</feature>
<feature type="region of interest" description="Hyaluronan-binding motif involved in chondroitin sulfate A- and C-binding" evidence="1">
    <location>
        <begin position="1128"/>
        <end position="1136"/>
    </location>
</feature>
<feature type="region of interest" description="Hyaluronan-binding motif involved in chondroitin sulfate C-binding" evidence="1">
    <location>
        <begin position="1139"/>
        <end position="1145"/>
    </location>
</feature>
<feature type="region of interest" description="Hyaluronan-binding motif involved in chondroitin sulfate A- and C-binding motif" evidence="1">
    <location>
        <begin position="1210"/>
        <end position="1218"/>
    </location>
</feature>
<feature type="compositionally biased region" description="Polar residues" evidence="6">
    <location>
        <begin position="211"/>
        <end position="229"/>
    </location>
</feature>
<feature type="compositionally biased region" description="Low complexity" evidence="6">
    <location>
        <begin position="431"/>
        <end position="443"/>
    </location>
</feature>
<feature type="glycosylation site" description="O-linked (GalNAc...) threonine" evidence="3">
    <location>
        <position position="193"/>
    </location>
</feature>
<feature type="glycosylation site" description="N-linked (GlcNAc...) asparagine" evidence="3">
    <location>
        <position position="225"/>
    </location>
</feature>
<feature type="glycosylation site" description="O-linked (GalNAc...) threonine" evidence="3">
    <location>
        <position position="231"/>
    </location>
</feature>
<feature type="glycosylation site" description="N-linked (GlcNAc...) asparagine" evidence="3">
    <location>
        <position position="297"/>
    </location>
</feature>
<feature type="glycosylation site" description="N-linked (GlcNAc...) asparagine" evidence="3">
    <location>
        <position position="316"/>
    </location>
</feature>
<feature type="glycosylation site" description="N-linked (GlcNAc...) asparagine" evidence="3">
    <location>
        <position position="366"/>
    </location>
</feature>
<feature type="glycosylation site" description="O-linked (GalNAc...) threonine" evidence="3">
    <location>
        <position position="429"/>
    </location>
</feature>
<feature type="glycosylation site" description="O-linked (GalNAc...) threonine" evidence="3">
    <location>
        <position position="430"/>
    </location>
</feature>
<feature type="glycosylation site" description="O-linked (GalNAc...) threonine" evidence="3">
    <location>
        <position position="431"/>
    </location>
</feature>
<feature type="glycosylation site" description="O-linked (GalNAc...) threonine" evidence="3">
    <location>
        <position position="817"/>
    </location>
</feature>
<feature type="glycosylation site" description="N-linked (GlcNAc...) asparagine" evidence="3">
    <location>
        <position position="841"/>
    </location>
</feature>
<feature type="glycosylation site" description="N-linked (GlcNAc...) asparagine" evidence="3">
    <location>
        <position position="945"/>
    </location>
</feature>
<feature type="glycosylation site" description="N-linked (GlcNAc...) asparagine" evidence="3">
    <location>
        <position position="959"/>
    </location>
</feature>
<feature type="disulfide bond" evidence="4">
    <location>
        <begin position="1017"/>
        <end position="1028"/>
    </location>
</feature>
<feature type="disulfide bond" evidence="4">
    <location>
        <begin position="1022"/>
        <end position="1039"/>
    </location>
</feature>
<feature type="disulfide bond" evidence="4">
    <location>
        <begin position="1041"/>
        <end position="1053"/>
    </location>
</feature>
<feature type="disulfide bond" evidence="4">
    <location>
        <begin position="1057"/>
        <end position="1070"/>
    </location>
</feature>
<feature type="disulfide bond" evidence="4">
    <location>
        <begin position="1064"/>
        <end position="1080"/>
    </location>
</feature>
<feature type="disulfide bond" evidence="4">
    <location>
        <begin position="1082"/>
        <end position="1095"/>
    </location>
</feature>
<protein>
    <recommendedName>
        <fullName>Interphotoreceptor matrix proteoglycan 2</fullName>
    </recommendedName>
    <alternativeName>
        <fullName>PG10.2</fullName>
    </alternativeName>
    <alternativeName>
        <fullName>Sialoprotein associated with cones and rods proteoglycan</fullName>
        <shortName>Spacrcan</shortName>
    </alternativeName>
</protein>
<dbReference type="EMBL" id="U76717">
    <property type="protein sequence ID" value="AAC52891.1"/>
    <property type="status" value="ALT_INIT"/>
    <property type="molecule type" value="mRNA"/>
</dbReference>
<dbReference type="SMR" id="P70628"/>
<dbReference type="FunCoup" id="P70628">
    <property type="interactions" value="4"/>
</dbReference>
<dbReference type="STRING" id="10116.ENSRNOP00000046981"/>
<dbReference type="GlyCosmos" id="P70628">
    <property type="glycosylation" value="13 sites, No reported glycans"/>
</dbReference>
<dbReference type="GlyGen" id="P70628">
    <property type="glycosylation" value="13 sites"/>
</dbReference>
<dbReference type="PhosphoSitePlus" id="P70628"/>
<dbReference type="PaxDb" id="10116-ENSRNOP00000046981"/>
<dbReference type="UCSC" id="RGD:708358">
    <property type="organism name" value="rat"/>
</dbReference>
<dbReference type="AGR" id="RGD:708358"/>
<dbReference type="RGD" id="708358">
    <property type="gene designation" value="Impg2"/>
</dbReference>
<dbReference type="eggNOG" id="ENOG502QT6W">
    <property type="taxonomic scope" value="Eukaryota"/>
</dbReference>
<dbReference type="InParanoid" id="P70628"/>
<dbReference type="PhylomeDB" id="P70628"/>
<dbReference type="PRO" id="PR:P70628"/>
<dbReference type="Proteomes" id="UP000002494">
    <property type="component" value="Unplaced"/>
</dbReference>
<dbReference type="GO" id="GO:0042995">
    <property type="term" value="C:cell projection"/>
    <property type="evidence" value="ECO:0007669"/>
    <property type="project" value="UniProtKB-KW"/>
</dbReference>
<dbReference type="GO" id="GO:0005576">
    <property type="term" value="C:extracellular region"/>
    <property type="evidence" value="ECO:0007669"/>
    <property type="project" value="UniProtKB-KW"/>
</dbReference>
<dbReference type="GO" id="GO:0033165">
    <property type="term" value="C:interphotoreceptor matrix"/>
    <property type="evidence" value="ECO:0000266"/>
    <property type="project" value="RGD"/>
</dbReference>
<dbReference type="GO" id="GO:0016020">
    <property type="term" value="C:membrane"/>
    <property type="evidence" value="ECO:0007669"/>
    <property type="project" value="UniProtKB-KW"/>
</dbReference>
<dbReference type="GO" id="GO:0043235">
    <property type="term" value="C:receptor complex"/>
    <property type="evidence" value="ECO:0000266"/>
    <property type="project" value="RGD"/>
</dbReference>
<dbReference type="GO" id="GO:0008201">
    <property type="term" value="F:heparin binding"/>
    <property type="evidence" value="ECO:0000266"/>
    <property type="project" value="RGD"/>
</dbReference>
<dbReference type="GO" id="GO:0005540">
    <property type="term" value="F:hyaluronic acid binding"/>
    <property type="evidence" value="ECO:0000266"/>
    <property type="project" value="RGD"/>
</dbReference>
<dbReference type="GO" id="GO:0030198">
    <property type="term" value="P:extracellular matrix organization"/>
    <property type="evidence" value="ECO:0000266"/>
    <property type="project" value="RGD"/>
</dbReference>
<dbReference type="GO" id="GO:0008104">
    <property type="term" value="P:protein localization"/>
    <property type="evidence" value="ECO:0000266"/>
    <property type="project" value="RGD"/>
</dbReference>
<dbReference type="GO" id="GO:0060042">
    <property type="term" value="P:retina morphogenesis in camera-type eye"/>
    <property type="evidence" value="ECO:0000266"/>
    <property type="project" value="RGD"/>
</dbReference>
<dbReference type="GO" id="GO:0007601">
    <property type="term" value="P:visual perception"/>
    <property type="evidence" value="ECO:0007669"/>
    <property type="project" value="InterPro"/>
</dbReference>
<dbReference type="FunFam" id="3.30.70.960:FF:000002">
    <property type="entry name" value="Interphotoreceptor matrix proteoglycan 2"/>
    <property type="match status" value="1"/>
</dbReference>
<dbReference type="Gene3D" id="2.10.25.10">
    <property type="entry name" value="Laminin"/>
    <property type="match status" value="1"/>
</dbReference>
<dbReference type="Gene3D" id="3.30.70.960">
    <property type="entry name" value="SEA domain"/>
    <property type="match status" value="2"/>
</dbReference>
<dbReference type="InterPro" id="IPR000742">
    <property type="entry name" value="EGF-like_dom"/>
</dbReference>
<dbReference type="InterPro" id="IPR039861">
    <property type="entry name" value="IMPG"/>
</dbReference>
<dbReference type="InterPro" id="IPR000082">
    <property type="entry name" value="SEA_dom"/>
</dbReference>
<dbReference type="InterPro" id="IPR036364">
    <property type="entry name" value="SEA_dom_sf"/>
</dbReference>
<dbReference type="PANTHER" id="PTHR12199">
    <property type="entry name" value="INTERPHOTORECEPTOR MATRIX PROTEOGLYCAN"/>
    <property type="match status" value="1"/>
</dbReference>
<dbReference type="PANTHER" id="PTHR12199:SF4">
    <property type="entry name" value="INTERPHOTORECEPTOR MATRIX PROTEOGLYCAN 2"/>
    <property type="match status" value="1"/>
</dbReference>
<dbReference type="Pfam" id="PF01390">
    <property type="entry name" value="SEA"/>
    <property type="match status" value="2"/>
</dbReference>
<dbReference type="SMART" id="SM00200">
    <property type="entry name" value="SEA"/>
    <property type="match status" value="2"/>
</dbReference>
<dbReference type="SUPFAM" id="SSF82671">
    <property type="entry name" value="SEA domain"/>
    <property type="match status" value="2"/>
</dbReference>
<dbReference type="PROSITE" id="PS01186">
    <property type="entry name" value="EGF_2"/>
    <property type="match status" value="1"/>
</dbReference>
<dbReference type="PROSITE" id="PS50026">
    <property type="entry name" value="EGF_3"/>
    <property type="match status" value="2"/>
</dbReference>
<dbReference type="PROSITE" id="PS50024">
    <property type="entry name" value="SEA"/>
    <property type="match status" value="2"/>
</dbReference>
<gene>
    <name type="primary">Impg2</name>
</gene>
<keyword id="KW-0966">Cell projection</keyword>
<keyword id="KW-1015">Disulfide bond</keyword>
<keyword id="KW-0245">EGF-like domain</keyword>
<keyword id="KW-0272">Extracellular matrix</keyword>
<keyword id="KW-0325">Glycoprotein</keyword>
<keyword id="KW-0358">Heparin-binding</keyword>
<keyword id="KW-0472">Membrane</keyword>
<keyword id="KW-0675">Receptor</keyword>
<keyword id="KW-1185">Reference proteome</keyword>
<keyword id="KW-0677">Repeat</keyword>
<keyword id="KW-0964">Secreted</keyword>
<keyword id="KW-0732">Signal</keyword>
<keyword id="KW-0812">Transmembrane</keyword>
<keyword id="KW-1133">Transmembrane helix</keyword>
<comment type="function">
    <text evidence="7">Chondroitin sulfate- and hyaluronan-binding proteoglycan involved in the organization of interphotoreceptor matrix; may participate in the maturation and maintenance of the light-sensitive photoreceptor outer segment. Binds heparin.</text>
</comment>
<comment type="subcellular location">
    <subcellularLocation>
        <location evidence="2">Photoreceptor outer segment membrane</location>
        <topology evidence="3">Single-pass type I membrane protein</topology>
    </subcellularLocation>
    <subcellularLocation>
        <location evidence="2">Photoreceptor inner segment membrane</location>
        <topology evidence="3">Single-pass type I membrane protein</topology>
    </subcellularLocation>
    <subcellularLocation>
        <location evidence="2">Secreted</location>
        <location evidence="2">Extracellular space</location>
        <location evidence="2">Extracellular matrix</location>
        <location evidence="2">Interphotoreceptor matrix</location>
    </subcellularLocation>
</comment>
<comment type="tissue specificity">
    <text evidence="8">Expressed in the pineal gland and the outer layer of the retina.</text>
</comment>
<comment type="developmental stage">
    <text evidence="7">Expressed in the photoreceptor cells of the retina at 16 dpc and in pineal gland at 21 dpc. Expressed at P5 in photoreceptor cells and P6 in the pineal gland at protein level.</text>
</comment>
<comment type="sequence caution" evidence="9">
    <conflict type="erroneous initiation">
        <sequence resource="EMBL-CDS" id="AAC52891"/>
    </conflict>
</comment>
<organism>
    <name type="scientific">Rattus norvegicus</name>
    <name type="common">Rat</name>
    <dbReference type="NCBI Taxonomy" id="10116"/>
    <lineage>
        <taxon>Eukaryota</taxon>
        <taxon>Metazoa</taxon>
        <taxon>Chordata</taxon>
        <taxon>Craniata</taxon>
        <taxon>Vertebrata</taxon>
        <taxon>Euteleostomi</taxon>
        <taxon>Mammalia</taxon>
        <taxon>Eutheria</taxon>
        <taxon>Euarchontoglires</taxon>
        <taxon>Glires</taxon>
        <taxon>Rodentia</taxon>
        <taxon>Myomorpha</taxon>
        <taxon>Muroidea</taxon>
        <taxon>Muridae</taxon>
        <taxon>Murinae</taxon>
        <taxon>Rattus</taxon>
    </lineage>
</organism>